<evidence type="ECO:0000255" key="1">
    <source>
        <dbReference type="HAMAP-Rule" id="MF_00012"/>
    </source>
</evidence>
<accession>Q3SW60</accession>
<dbReference type="EC" id="4.2.1.9" evidence="1"/>
<dbReference type="EMBL" id="CP000115">
    <property type="protein sequence ID" value="ABA03481.1"/>
    <property type="molecule type" value="Genomic_DNA"/>
</dbReference>
<dbReference type="RefSeq" id="WP_011313548.1">
    <property type="nucleotide sequence ID" value="NC_007406.1"/>
</dbReference>
<dbReference type="SMR" id="Q3SW60"/>
<dbReference type="STRING" id="323098.Nwi_0213"/>
<dbReference type="KEGG" id="nwi:Nwi_0213"/>
<dbReference type="eggNOG" id="COG0129">
    <property type="taxonomic scope" value="Bacteria"/>
</dbReference>
<dbReference type="HOGENOM" id="CLU_014271_4_3_5"/>
<dbReference type="OrthoDB" id="7793094at2"/>
<dbReference type="UniPathway" id="UPA00047">
    <property type="reaction ID" value="UER00057"/>
</dbReference>
<dbReference type="UniPathway" id="UPA00049">
    <property type="reaction ID" value="UER00061"/>
</dbReference>
<dbReference type="Proteomes" id="UP000002531">
    <property type="component" value="Chromosome"/>
</dbReference>
<dbReference type="GO" id="GO:0005829">
    <property type="term" value="C:cytosol"/>
    <property type="evidence" value="ECO:0007669"/>
    <property type="project" value="TreeGrafter"/>
</dbReference>
<dbReference type="GO" id="GO:0051537">
    <property type="term" value="F:2 iron, 2 sulfur cluster binding"/>
    <property type="evidence" value="ECO:0007669"/>
    <property type="project" value="UniProtKB-UniRule"/>
</dbReference>
<dbReference type="GO" id="GO:0004160">
    <property type="term" value="F:dihydroxy-acid dehydratase activity"/>
    <property type="evidence" value="ECO:0007669"/>
    <property type="project" value="UniProtKB-UniRule"/>
</dbReference>
<dbReference type="GO" id="GO:0000287">
    <property type="term" value="F:magnesium ion binding"/>
    <property type="evidence" value="ECO:0007669"/>
    <property type="project" value="UniProtKB-UniRule"/>
</dbReference>
<dbReference type="GO" id="GO:0009097">
    <property type="term" value="P:isoleucine biosynthetic process"/>
    <property type="evidence" value="ECO:0007669"/>
    <property type="project" value="UniProtKB-UniRule"/>
</dbReference>
<dbReference type="GO" id="GO:0009099">
    <property type="term" value="P:L-valine biosynthetic process"/>
    <property type="evidence" value="ECO:0007669"/>
    <property type="project" value="UniProtKB-UniRule"/>
</dbReference>
<dbReference type="FunFam" id="3.50.30.80:FF:000001">
    <property type="entry name" value="Dihydroxy-acid dehydratase"/>
    <property type="match status" value="1"/>
</dbReference>
<dbReference type="Gene3D" id="3.50.30.80">
    <property type="entry name" value="IlvD/EDD C-terminal domain-like"/>
    <property type="match status" value="1"/>
</dbReference>
<dbReference type="HAMAP" id="MF_00012">
    <property type="entry name" value="IlvD"/>
    <property type="match status" value="1"/>
</dbReference>
<dbReference type="InterPro" id="IPR042096">
    <property type="entry name" value="Dihydro-acid_dehy_C"/>
</dbReference>
<dbReference type="InterPro" id="IPR004404">
    <property type="entry name" value="DihydroxyA_deHydtase"/>
</dbReference>
<dbReference type="InterPro" id="IPR020558">
    <property type="entry name" value="DiOHA_6PGluconate_deHydtase_CS"/>
</dbReference>
<dbReference type="InterPro" id="IPR056740">
    <property type="entry name" value="ILV_EDD_C"/>
</dbReference>
<dbReference type="InterPro" id="IPR000581">
    <property type="entry name" value="ILV_EDD_N"/>
</dbReference>
<dbReference type="InterPro" id="IPR037237">
    <property type="entry name" value="IlvD/EDD_N"/>
</dbReference>
<dbReference type="NCBIfam" id="TIGR00110">
    <property type="entry name" value="ilvD"/>
    <property type="match status" value="1"/>
</dbReference>
<dbReference type="NCBIfam" id="NF009103">
    <property type="entry name" value="PRK12448.1"/>
    <property type="match status" value="1"/>
</dbReference>
<dbReference type="PANTHER" id="PTHR43661">
    <property type="entry name" value="D-XYLONATE DEHYDRATASE"/>
    <property type="match status" value="1"/>
</dbReference>
<dbReference type="PANTHER" id="PTHR43661:SF3">
    <property type="entry name" value="D-XYLONATE DEHYDRATASE YAGF-RELATED"/>
    <property type="match status" value="1"/>
</dbReference>
<dbReference type="Pfam" id="PF24877">
    <property type="entry name" value="ILV_EDD_C"/>
    <property type="match status" value="1"/>
</dbReference>
<dbReference type="Pfam" id="PF00920">
    <property type="entry name" value="ILVD_EDD_N"/>
    <property type="match status" value="1"/>
</dbReference>
<dbReference type="SUPFAM" id="SSF143975">
    <property type="entry name" value="IlvD/EDD N-terminal domain-like"/>
    <property type="match status" value="1"/>
</dbReference>
<dbReference type="SUPFAM" id="SSF52016">
    <property type="entry name" value="LeuD/IlvD-like"/>
    <property type="match status" value="1"/>
</dbReference>
<dbReference type="PROSITE" id="PS00886">
    <property type="entry name" value="ILVD_EDD_1"/>
    <property type="match status" value="1"/>
</dbReference>
<dbReference type="PROSITE" id="PS00887">
    <property type="entry name" value="ILVD_EDD_2"/>
    <property type="match status" value="1"/>
</dbReference>
<keyword id="KW-0001">2Fe-2S</keyword>
<keyword id="KW-0028">Amino-acid biosynthesis</keyword>
<keyword id="KW-0100">Branched-chain amino acid biosynthesis</keyword>
<keyword id="KW-0408">Iron</keyword>
<keyword id="KW-0411">Iron-sulfur</keyword>
<keyword id="KW-0456">Lyase</keyword>
<keyword id="KW-0460">Magnesium</keyword>
<keyword id="KW-0479">Metal-binding</keyword>
<keyword id="KW-1185">Reference proteome</keyword>
<sequence length="614" mass="65467">MPAYRSRTSTHGRNMAGARGLWRATGMKNEDFGKPIIAVVNSFTQFVPGHVHLKDLGQLVAREIEKAGGVAKEFHTIAVDDGIAMGHDGMLYSLPSREVIADSVEYMVNAHCADAMVCISNCDKITPGMLMASLRLNIPSVFVSGGPMESGKVTLNGKVKSVDLIDAMVAAADDSVSDADVEAIERSACPTCGSCSGMFTANSMNCLTEALGLALPGNGSVLATHADRKGLFVEAGHLIVDMARRYYEQNDERVLPRSVASFKAFENAMTLDISMGGSTNTVLHLLAAAYEGEVPFTMADIDRLSRRVPVLCKVAPSVADVHLEDVHRAGGIMGILGELDRAGLIDASLPTVHSNSLREALERWDIKRTKSESVRTFYTAAPGGVRTEIAFSQDKRFEELDADRAKGCIRDAEHAFSKDGGLAVLYGNIARDGCIVKTAGVDDSILTFSGPARVFESQDAAVDAILGNRIKPGDVVLIRYEGPRGGPGMQEMLYPTSYLKSKGLGKQCALITDGRFSGGSSGLSIGHVSPEAAEGGAIGLVEEGDLIAFDIPNRKVHLDVSDAELERRRAAMEAKGDKAWKPAAPRTRRITMALKAYAAHTTSAALGAVRVVKD</sequence>
<comment type="function">
    <text evidence="1">Functions in the biosynthesis of branched-chain amino acids. Catalyzes the dehydration of (2R,3R)-2,3-dihydroxy-3-methylpentanoate (2,3-dihydroxy-3-methylvalerate) into 2-oxo-3-methylpentanoate (2-oxo-3-methylvalerate) and of (2R)-2,3-dihydroxy-3-methylbutanoate (2,3-dihydroxyisovalerate) into 2-oxo-3-methylbutanoate (2-oxoisovalerate), the penultimate precursor to L-isoleucine and L-valine, respectively.</text>
</comment>
<comment type="catalytic activity">
    <reaction evidence="1">
        <text>(2R)-2,3-dihydroxy-3-methylbutanoate = 3-methyl-2-oxobutanoate + H2O</text>
        <dbReference type="Rhea" id="RHEA:24809"/>
        <dbReference type="ChEBI" id="CHEBI:11851"/>
        <dbReference type="ChEBI" id="CHEBI:15377"/>
        <dbReference type="ChEBI" id="CHEBI:49072"/>
        <dbReference type="EC" id="4.2.1.9"/>
    </reaction>
    <physiologicalReaction direction="left-to-right" evidence="1">
        <dbReference type="Rhea" id="RHEA:24810"/>
    </physiologicalReaction>
</comment>
<comment type="catalytic activity">
    <reaction evidence="1">
        <text>(2R,3R)-2,3-dihydroxy-3-methylpentanoate = (S)-3-methyl-2-oxopentanoate + H2O</text>
        <dbReference type="Rhea" id="RHEA:27694"/>
        <dbReference type="ChEBI" id="CHEBI:15377"/>
        <dbReference type="ChEBI" id="CHEBI:35146"/>
        <dbReference type="ChEBI" id="CHEBI:49258"/>
        <dbReference type="EC" id="4.2.1.9"/>
    </reaction>
    <physiologicalReaction direction="left-to-right" evidence="1">
        <dbReference type="Rhea" id="RHEA:27695"/>
    </physiologicalReaction>
</comment>
<comment type="cofactor">
    <cofactor evidence="1">
        <name>[2Fe-2S] cluster</name>
        <dbReference type="ChEBI" id="CHEBI:190135"/>
    </cofactor>
    <text evidence="1">Binds 1 [2Fe-2S] cluster per subunit. This cluster acts as a Lewis acid cofactor.</text>
</comment>
<comment type="cofactor">
    <cofactor evidence="1">
        <name>Mg(2+)</name>
        <dbReference type="ChEBI" id="CHEBI:18420"/>
    </cofactor>
</comment>
<comment type="pathway">
    <text evidence="1">Amino-acid biosynthesis; L-isoleucine biosynthesis; L-isoleucine from 2-oxobutanoate: step 3/4.</text>
</comment>
<comment type="pathway">
    <text evidence="1">Amino-acid biosynthesis; L-valine biosynthesis; L-valine from pyruvate: step 3/4.</text>
</comment>
<comment type="subunit">
    <text evidence="1">Homodimer.</text>
</comment>
<comment type="similarity">
    <text evidence="1">Belongs to the IlvD/Edd family.</text>
</comment>
<proteinExistence type="inferred from homology"/>
<gene>
    <name evidence="1" type="primary">ilvD</name>
    <name type="ordered locus">Nwi_0213</name>
</gene>
<name>ILVD_NITWN</name>
<reference key="1">
    <citation type="journal article" date="2006" name="Appl. Environ. Microbiol.">
        <title>Genome sequence of the chemolithoautotrophic nitrite-oxidizing bacterium Nitrobacter winogradskyi Nb-255.</title>
        <authorList>
            <person name="Starkenburg S.R."/>
            <person name="Chain P.S.G."/>
            <person name="Sayavedra-Soto L.A."/>
            <person name="Hauser L."/>
            <person name="Land M.L."/>
            <person name="Larimer F.W."/>
            <person name="Malfatti S.A."/>
            <person name="Klotz M.G."/>
            <person name="Bottomley P.J."/>
            <person name="Arp D.J."/>
            <person name="Hickey W.J."/>
        </authorList>
    </citation>
    <scope>NUCLEOTIDE SEQUENCE [LARGE SCALE GENOMIC DNA]</scope>
    <source>
        <strain>ATCC 25391 / DSM 10237 / CIP 104748 / NCIMB 11846 / Nb-255</strain>
    </source>
</reference>
<protein>
    <recommendedName>
        <fullName evidence="1">Dihydroxy-acid dehydratase</fullName>
        <shortName evidence="1">DAD</shortName>
        <ecNumber evidence="1">4.2.1.9</ecNumber>
    </recommendedName>
</protein>
<organism>
    <name type="scientific">Nitrobacter winogradskyi (strain ATCC 25391 / DSM 10237 / CIP 104748 / NCIMB 11846 / Nb-255)</name>
    <dbReference type="NCBI Taxonomy" id="323098"/>
    <lineage>
        <taxon>Bacteria</taxon>
        <taxon>Pseudomonadati</taxon>
        <taxon>Pseudomonadota</taxon>
        <taxon>Alphaproteobacteria</taxon>
        <taxon>Hyphomicrobiales</taxon>
        <taxon>Nitrobacteraceae</taxon>
        <taxon>Nitrobacter</taxon>
    </lineage>
</organism>
<feature type="chain" id="PRO_0000225399" description="Dihydroxy-acid dehydratase">
    <location>
        <begin position="1"/>
        <end position="614"/>
    </location>
</feature>
<feature type="active site" description="Proton acceptor" evidence="1">
    <location>
        <position position="517"/>
    </location>
</feature>
<feature type="binding site" evidence="1">
    <location>
        <position position="81"/>
    </location>
    <ligand>
        <name>Mg(2+)</name>
        <dbReference type="ChEBI" id="CHEBI:18420"/>
    </ligand>
</feature>
<feature type="binding site" evidence="1">
    <location>
        <position position="122"/>
    </location>
    <ligand>
        <name>[2Fe-2S] cluster</name>
        <dbReference type="ChEBI" id="CHEBI:190135"/>
    </ligand>
</feature>
<feature type="binding site" evidence="1">
    <location>
        <position position="123"/>
    </location>
    <ligand>
        <name>Mg(2+)</name>
        <dbReference type="ChEBI" id="CHEBI:18420"/>
    </ligand>
</feature>
<feature type="binding site" description="via carbamate group" evidence="1">
    <location>
        <position position="124"/>
    </location>
    <ligand>
        <name>Mg(2+)</name>
        <dbReference type="ChEBI" id="CHEBI:18420"/>
    </ligand>
</feature>
<feature type="binding site" evidence="1">
    <location>
        <position position="195"/>
    </location>
    <ligand>
        <name>[2Fe-2S] cluster</name>
        <dbReference type="ChEBI" id="CHEBI:190135"/>
    </ligand>
</feature>
<feature type="binding site" evidence="1">
    <location>
        <position position="491"/>
    </location>
    <ligand>
        <name>Mg(2+)</name>
        <dbReference type="ChEBI" id="CHEBI:18420"/>
    </ligand>
</feature>
<feature type="modified residue" description="N6-carboxylysine" evidence="1">
    <location>
        <position position="124"/>
    </location>
</feature>